<protein>
    <recommendedName>
        <fullName evidence="1">Peptidyl-tRNA hydrolase</fullName>
        <shortName evidence="1">Pth</shortName>
        <ecNumber evidence="1">3.1.1.29</ecNumber>
    </recommendedName>
</protein>
<evidence type="ECO:0000255" key="1">
    <source>
        <dbReference type="HAMAP-Rule" id="MF_00083"/>
    </source>
</evidence>
<evidence type="ECO:0000256" key="2">
    <source>
        <dbReference type="SAM" id="MobiDB-lite"/>
    </source>
</evidence>
<gene>
    <name evidence="1" type="primary">pth</name>
    <name type="ordered locus">Vapar_4347</name>
</gene>
<accession>C5CYZ7</accession>
<keyword id="KW-0963">Cytoplasm</keyword>
<keyword id="KW-0378">Hydrolase</keyword>
<keyword id="KW-0694">RNA-binding</keyword>
<keyword id="KW-0820">tRNA-binding</keyword>
<name>PTH_VARPS</name>
<proteinExistence type="inferred from homology"/>
<reference key="1">
    <citation type="journal article" date="2011" name="J. Bacteriol.">
        <title>Complete genome sequence of the metabolically versatile plant growth-promoting endophyte, Variovorax paradoxus S110.</title>
        <authorList>
            <person name="Han J.I."/>
            <person name="Choi H.K."/>
            <person name="Lee S.W."/>
            <person name="Orwin P.M."/>
            <person name="Kim J."/>
            <person name="Laroe S.L."/>
            <person name="Kim T.G."/>
            <person name="O'Neil J."/>
            <person name="Leadbetter J.R."/>
            <person name="Lee S.Y."/>
            <person name="Hur C.G."/>
            <person name="Spain J.C."/>
            <person name="Ovchinnikova G."/>
            <person name="Goodwin L."/>
            <person name="Han C."/>
        </authorList>
    </citation>
    <scope>NUCLEOTIDE SEQUENCE [LARGE SCALE GENOMIC DNA]</scope>
    <source>
        <strain>S110</strain>
    </source>
</reference>
<comment type="function">
    <text evidence="1">Hydrolyzes ribosome-free peptidyl-tRNAs (with 1 or more amino acids incorporated), which drop off the ribosome during protein synthesis, or as a result of ribosome stalling.</text>
</comment>
<comment type="function">
    <text evidence="1">Catalyzes the release of premature peptidyl moieties from peptidyl-tRNA molecules trapped in stalled 50S ribosomal subunits, and thus maintains levels of free tRNAs and 50S ribosomes.</text>
</comment>
<comment type="catalytic activity">
    <reaction evidence="1">
        <text>an N-acyl-L-alpha-aminoacyl-tRNA + H2O = an N-acyl-L-amino acid + a tRNA + H(+)</text>
        <dbReference type="Rhea" id="RHEA:54448"/>
        <dbReference type="Rhea" id="RHEA-COMP:10123"/>
        <dbReference type="Rhea" id="RHEA-COMP:13883"/>
        <dbReference type="ChEBI" id="CHEBI:15377"/>
        <dbReference type="ChEBI" id="CHEBI:15378"/>
        <dbReference type="ChEBI" id="CHEBI:59874"/>
        <dbReference type="ChEBI" id="CHEBI:78442"/>
        <dbReference type="ChEBI" id="CHEBI:138191"/>
        <dbReference type="EC" id="3.1.1.29"/>
    </reaction>
</comment>
<comment type="subunit">
    <text evidence="1">Monomer.</text>
</comment>
<comment type="subcellular location">
    <subcellularLocation>
        <location evidence="1">Cytoplasm</location>
    </subcellularLocation>
</comment>
<comment type="similarity">
    <text evidence="1">Belongs to the PTH family.</text>
</comment>
<feature type="chain" id="PRO_1000202602" description="Peptidyl-tRNA hydrolase">
    <location>
        <begin position="1"/>
        <end position="210"/>
    </location>
</feature>
<feature type="region of interest" description="Disordered" evidence="2">
    <location>
        <begin position="186"/>
        <end position="210"/>
    </location>
</feature>
<feature type="active site" description="Proton acceptor" evidence="1">
    <location>
        <position position="20"/>
    </location>
</feature>
<feature type="binding site" evidence="1">
    <location>
        <position position="15"/>
    </location>
    <ligand>
        <name>tRNA</name>
        <dbReference type="ChEBI" id="CHEBI:17843"/>
    </ligand>
</feature>
<feature type="binding site" evidence="1">
    <location>
        <position position="66"/>
    </location>
    <ligand>
        <name>tRNA</name>
        <dbReference type="ChEBI" id="CHEBI:17843"/>
    </ligand>
</feature>
<feature type="binding site" evidence="1">
    <location>
        <position position="68"/>
    </location>
    <ligand>
        <name>tRNA</name>
        <dbReference type="ChEBI" id="CHEBI:17843"/>
    </ligand>
</feature>
<feature type="binding site" evidence="1">
    <location>
        <position position="114"/>
    </location>
    <ligand>
        <name>tRNA</name>
        <dbReference type="ChEBI" id="CHEBI:17843"/>
    </ligand>
</feature>
<feature type="site" description="Discriminates between blocked and unblocked aminoacyl-tRNA" evidence="1">
    <location>
        <position position="10"/>
    </location>
</feature>
<feature type="site" description="Stabilizes the basic form of H active site to accept a proton" evidence="1">
    <location>
        <position position="93"/>
    </location>
</feature>
<dbReference type="EC" id="3.1.1.29" evidence="1"/>
<dbReference type="EMBL" id="CP001635">
    <property type="protein sequence ID" value="ACS20958.1"/>
    <property type="molecule type" value="Genomic_DNA"/>
</dbReference>
<dbReference type="SMR" id="C5CYZ7"/>
<dbReference type="STRING" id="543728.Vapar_4347"/>
<dbReference type="KEGG" id="vap:Vapar_4347"/>
<dbReference type="eggNOG" id="COG0193">
    <property type="taxonomic scope" value="Bacteria"/>
</dbReference>
<dbReference type="HOGENOM" id="CLU_062456_3_1_4"/>
<dbReference type="OrthoDB" id="9800507at2"/>
<dbReference type="GO" id="GO:0005737">
    <property type="term" value="C:cytoplasm"/>
    <property type="evidence" value="ECO:0007669"/>
    <property type="project" value="UniProtKB-SubCell"/>
</dbReference>
<dbReference type="GO" id="GO:0004045">
    <property type="term" value="F:peptidyl-tRNA hydrolase activity"/>
    <property type="evidence" value="ECO:0007669"/>
    <property type="project" value="UniProtKB-UniRule"/>
</dbReference>
<dbReference type="GO" id="GO:0000049">
    <property type="term" value="F:tRNA binding"/>
    <property type="evidence" value="ECO:0007669"/>
    <property type="project" value="UniProtKB-UniRule"/>
</dbReference>
<dbReference type="GO" id="GO:0006515">
    <property type="term" value="P:protein quality control for misfolded or incompletely synthesized proteins"/>
    <property type="evidence" value="ECO:0007669"/>
    <property type="project" value="UniProtKB-UniRule"/>
</dbReference>
<dbReference type="GO" id="GO:0072344">
    <property type="term" value="P:rescue of stalled ribosome"/>
    <property type="evidence" value="ECO:0007669"/>
    <property type="project" value="UniProtKB-UniRule"/>
</dbReference>
<dbReference type="CDD" id="cd00462">
    <property type="entry name" value="PTH"/>
    <property type="match status" value="1"/>
</dbReference>
<dbReference type="FunFam" id="3.40.50.1470:FF:000001">
    <property type="entry name" value="Peptidyl-tRNA hydrolase"/>
    <property type="match status" value="1"/>
</dbReference>
<dbReference type="Gene3D" id="3.40.50.1470">
    <property type="entry name" value="Peptidyl-tRNA hydrolase"/>
    <property type="match status" value="1"/>
</dbReference>
<dbReference type="HAMAP" id="MF_00083">
    <property type="entry name" value="Pept_tRNA_hydro_bact"/>
    <property type="match status" value="1"/>
</dbReference>
<dbReference type="InterPro" id="IPR001328">
    <property type="entry name" value="Pept_tRNA_hydro"/>
</dbReference>
<dbReference type="InterPro" id="IPR018171">
    <property type="entry name" value="Pept_tRNA_hydro_CS"/>
</dbReference>
<dbReference type="InterPro" id="IPR036416">
    <property type="entry name" value="Pept_tRNA_hydro_sf"/>
</dbReference>
<dbReference type="NCBIfam" id="TIGR00447">
    <property type="entry name" value="pth"/>
    <property type="match status" value="1"/>
</dbReference>
<dbReference type="PANTHER" id="PTHR17224">
    <property type="entry name" value="PEPTIDYL-TRNA HYDROLASE"/>
    <property type="match status" value="1"/>
</dbReference>
<dbReference type="PANTHER" id="PTHR17224:SF1">
    <property type="entry name" value="PEPTIDYL-TRNA HYDROLASE"/>
    <property type="match status" value="1"/>
</dbReference>
<dbReference type="Pfam" id="PF01195">
    <property type="entry name" value="Pept_tRNA_hydro"/>
    <property type="match status" value="1"/>
</dbReference>
<dbReference type="SUPFAM" id="SSF53178">
    <property type="entry name" value="Peptidyl-tRNA hydrolase-like"/>
    <property type="match status" value="1"/>
</dbReference>
<dbReference type="PROSITE" id="PS01196">
    <property type="entry name" value="PEPT_TRNA_HYDROL_2"/>
    <property type="match status" value="1"/>
</dbReference>
<sequence>MIKLFVGLGNPGPEYEATRHNAGFWWIDALARDWKLNLVPERSYHGLAARTNIGGQSVWLLEPQTFMNLSGKSVGALARFFKIAPEEILVVHDELDVVPGQAKLKFGGSHAGHNGLRDIHAQLGTGDYWRLRLGIGHPGVKSEVINWVLKKPLKEQREAIEDAIVRTLHAAPALVAGEMEKATLIIHTSKPPRPKPPRREPGDGGTPATA</sequence>
<organism>
    <name type="scientific">Variovorax paradoxus (strain S110)</name>
    <dbReference type="NCBI Taxonomy" id="543728"/>
    <lineage>
        <taxon>Bacteria</taxon>
        <taxon>Pseudomonadati</taxon>
        <taxon>Pseudomonadota</taxon>
        <taxon>Betaproteobacteria</taxon>
        <taxon>Burkholderiales</taxon>
        <taxon>Comamonadaceae</taxon>
        <taxon>Variovorax</taxon>
    </lineage>
</organism>